<dbReference type="EC" id="2.1.1.186" evidence="1"/>
<dbReference type="EMBL" id="CP000569">
    <property type="protein sequence ID" value="ABN73785.1"/>
    <property type="molecule type" value="Genomic_DNA"/>
</dbReference>
<dbReference type="RefSeq" id="WP_009874712.1">
    <property type="nucleotide sequence ID" value="NC_009053.1"/>
</dbReference>
<dbReference type="SMR" id="A3N049"/>
<dbReference type="STRING" id="416269.APL_0685"/>
<dbReference type="EnsemblBacteria" id="ABN73785">
    <property type="protein sequence ID" value="ABN73785"/>
    <property type="gene ID" value="APL_0685"/>
</dbReference>
<dbReference type="KEGG" id="apl:APL_0685"/>
<dbReference type="PATRIC" id="fig|416269.6.peg.717"/>
<dbReference type="eggNOG" id="COG2933">
    <property type="taxonomic scope" value="Bacteria"/>
</dbReference>
<dbReference type="HOGENOM" id="CLU_043780_0_0_6"/>
<dbReference type="Proteomes" id="UP000001432">
    <property type="component" value="Chromosome"/>
</dbReference>
<dbReference type="GO" id="GO:0005737">
    <property type="term" value="C:cytoplasm"/>
    <property type="evidence" value="ECO:0007669"/>
    <property type="project" value="UniProtKB-SubCell"/>
</dbReference>
<dbReference type="GO" id="GO:0008757">
    <property type="term" value="F:S-adenosylmethionine-dependent methyltransferase activity"/>
    <property type="evidence" value="ECO:0007669"/>
    <property type="project" value="UniProtKB-UniRule"/>
</dbReference>
<dbReference type="GO" id="GO:0032259">
    <property type="term" value="P:methylation"/>
    <property type="evidence" value="ECO:0007669"/>
    <property type="project" value="UniProtKB-KW"/>
</dbReference>
<dbReference type="GO" id="GO:0006364">
    <property type="term" value="P:rRNA processing"/>
    <property type="evidence" value="ECO:0007669"/>
    <property type="project" value="UniProtKB-UniRule"/>
</dbReference>
<dbReference type="Gene3D" id="3.30.2300.20">
    <property type="match status" value="1"/>
</dbReference>
<dbReference type="Gene3D" id="3.30.70.2810">
    <property type="match status" value="1"/>
</dbReference>
<dbReference type="Gene3D" id="3.40.50.150">
    <property type="entry name" value="Vaccinia Virus protein VP39"/>
    <property type="match status" value="1"/>
</dbReference>
<dbReference type="HAMAP" id="MF_01551">
    <property type="entry name" value="23SrRNA_methyltr_M"/>
    <property type="match status" value="1"/>
</dbReference>
<dbReference type="InterPro" id="IPR040739">
    <property type="entry name" value="RlmM_FDX"/>
</dbReference>
<dbReference type="InterPro" id="IPR048646">
    <property type="entry name" value="RlmM_THUMP-like"/>
</dbReference>
<dbReference type="InterPro" id="IPR002877">
    <property type="entry name" value="RNA_MeTrfase_FtsJ_dom"/>
</dbReference>
<dbReference type="InterPro" id="IPR011224">
    <property type="entry name" value="rRNA_MeTrfase_M"/>
</dbReference>
<dbReference type="InterPro" id="IPR029063">
    <property type="entry name" value="SAM-dependent_MTases_sf"/>
</dbReference>
<dbReference type="NCBIfam" id="NF008734">
    <property type="entry name" value="PRK11760.1"/>
    <property type="match status" value="1"/>
</dbReference>
<dbReference type="PANTHER" id="PTHR37524">
    <property type="entry name" value="RIBOSOMAL RNA LARGE SUBUNIT METHYLTRANSFERASE M"/>
    <property type="match status" value="1"/>
</dbReference>
<dbReference type="PANTHER" id="PTHR37524:SF2">
    <property type="entry name" value="RIBOSOMAL RNA METHYLTRANSFERASE FTSJ DOMAIN-CONTAINING PROTEIN"/>
    <property type="match status" value="1"/>
</dbReference>
<dbReference type="Pfam" id="PF01728">
    <property type="entry name" value="FtsJ"/>
    <property type="match status" value="1"/>
</dbReference>
<dbReference type="Pfam" id="PF18125">
    <property type="entry name" value="RlmM_FDX"/>
    <property type="match status" value="1"/>
</dbReference>
<dbReference type="Pfam" id="PF21239">
    <property type="entry name" value="RLMM_N"/>
    <property type="match status" value="1"/>
</dbReference>
<dbReference type="PIRSF" id="PIRSF028774">
    <property type="entry name" value="UCP028774"/>
    <property type="match status" value="1"/>
</dbReference>
<dbReference type="SUPFAM" id="SSF53335">
    <property type="entry name" value="S-adenosyl-L-methionine-dependent methyltransferases"/>
    <property type="match status" value="1"/>
</dbReference>
<name>RLMM_ACTP2</name>
<comment type="function">
    <text evidence="1">Catalyzes the 2'-O-methylation at nucleotide C2498 in 23S rRNA.</text>
</comment>
<comment type="catalytic activity">
    <reaction evidence="1">
        <text>cytidine(2498) in 23S rRNA + S-adenosyl-L-methionine = 2'-O-methylcytidine(2498) in 23S rRNA + S-adenosyl-L-homocysteine + H(+)</text>
        <dbReference type="Rhea" id="RHEA:42788"/>
        <dbReference type="Rhea" id="RHEA-COMP:10244"/>
        <dbReference type="Rhea" id="RHEA-COMP:10245"/>
        <dbReference type="ChEBI" id="CHEBI:15378"/>
        <dbReference type="ChEBI" id="CHEBI:57856"/>
        <dbReference type="ChEBI" id="CHEBI:59789"/>
        <dbReference type="ChEBI" id="CHEBI:74495"/>
        <dbReference type="ChEBI" id="CHEBI:82748"/>
        <dbReference type="EC" id="2.1.1.186"/>
    </reaction>
</comment>
<comment type="subunit">
    <text evidence="1">Monomer.</text>
</comment>
<comment type="subcellular location">
    <subcellularLocation>
        <location evidence="1">Cytoplasm</location>
    </subcellularLocation>
</comment>
<comment type="similarity">
    <text evidence="1">Belongs to the class I-like SAM-binding methyltransferase superfamily. RNA methyltransferase RlmE family. RlmM subfamily.</text>
</comment>
<accession>A3N049</accession>
<keyword id="KW-0963">Cytoplasm</keyword>
<keyword id="KW-0489">Methyltransferase</keyword>
<keyword id="KW-1185">Reference proteome</keyword>
<keyword id="KW-0698">rRNA processing</keyword>
<keyword id="KW-0949">S-adenosyl-L-methionine</keyword>
<keyword id="KW-0808">Transferase</keyword>
<feature type="chain" id="PRO_0000314504" description="Ribosomal RNA large subunit methyltransferase M">
    <location>
        <begin position="1"/>
        <end position="363"/>
    </location>
</feature>
<feature type="active site" description="Proton acceptor" evidence="1">
    <location>
        <position position="309"/>
    </location>
</feature>
<feature type="binding site" evidence="1">
    <location>
        <position position="190"/>
    </location>
    <ligand>
        <name>S-adenosyl-L-methionine</name>
        <dbReference type="ChEBI" id="CHEBI:59789"/>
    </ligand>
</feature>
<feature type="binding site" evidence="1">
    <location>
        <begin position="223"/>
        <end position="226"/>
    </location>
    <ligand>
        <name>S-adenosyl-L-methionine</name>
        <dbReference type="ChEBI" id="CHEBI:59789"/>
    </ligand>
</feature>
<feature type="binding site" evidence="1">
    <location>
        <position position="242"/>
    </location>
    <ligand>
        <name>S-adenosyl-L-methionine</name>
        <dbReference type="ChEBI" id="CHEBI:59789"/>
    </ligand>
</feature>
<feature type="binding site" evidence="1">
    <location>
        <position position="262"/>
    </location>
    <ligand>
        <name>S-adenosyl-L-methionine</name>
        <dbReference type="ChEBI" id="CHEBI:59789"/>
    </ligand>
</feature>
<feature type="binding site" evidence="1">
    <location>
        <position position="280"/>
    </location>
    <ligand>
        <name>S-adenosyl-L-methionine</name>
        <dbReference type="ChEBI" id="CHEBI:59789"/>
    </ligand>
</feature>
<reference key="1">
    <citation type="journal article" date="2008" name="J. Bacteriol.">
        <title>The complete genome sequence of Actinobacillus pleuropneumoniae L20 (serotype 5b).</title>
        <authorList>
            <person name="Foote S.J."/>
            <person name="Bosse J.T."/>
            <person name="Bouevitch A.B."/>
            <person name="Langford P.R."/>
            <person name="Young N.M."/>
            <person name="Nash J.H.E."/>
        </authorList>
    </citation>
    <scope>NUCLEOTIDE SEQUENCE [LARGE SCALE GENOMIC DNA]</scope>
    <source>
        <strain>L20</strain>
    </source>
</reference>
<gene>
    <name evidence="1" type="primary">rlmM</name>
    <name type="ordered locus">APL_0685</name>
</gene>
<organism>
    <name type="scientific">Actinobacillus pleuropneumoniae serotype 5b (strain L20)</name>
    <dbReference type="NCBI Taxonomy" id="416269"/>
    <lineage>
        <taxon>Bacteria</taxon>
        <taxon>Pseudomonadati</taxon>
        <taxon>Pseudomonadota</taxon>
        <taxon>Gammaproteobacteria</taxon>
        <taxon>Pasteurellales</taxon>
        <taxon>Pasteurellaceae</taxon>
        <taxon>Actinobacillus</taxon>
    </lineage>
</organism>
<protein>
    <recommendedName>
        <fullName evidence="1">Ribosomal RNA large subunit methyltransferase M</fullName>
        <ecNumber evidence="1">2.1.1.186</ecNumber>
    </recommendedName>
    <alternativeName>
        <fullName evidence="1">23S rRNA (cytidine2498-2'-O)-methyltransferase</fullName>
    </alternativeName>
    <alternativeName>
        <fullName evidence="1">23S rRNA 2'-O-ribose methyltransferase RlmM</fullName>
    </alternativeName>
</protein>
<proteinExistence type="inferred from homology"/>
<evidence type="ECO:0000255" key="1">
    <source>
        <dbReference type="HAMAP-Rule" id="MF_01551"/>
    </source>
</evidence>
<sequence>MNKLALYCRAGFEKETAGEITDKAAQLGVFGFVNLKENSGYIIFECYQAGDADRLARELKFEQLIFARQMIVVGDMLQDLPAEDRISPIVAQYQALNPRHSSDIFVETPDTNEAKELLTFCRKFTVPLRSSLKKQGWLTKSERAKGSMGLHILFVRPGCCYVGYAYNDNKSPFFMGIPRLKFPAEAPSRSTLKLEEAILTFIPEAEEKKRFTDEMTGVDLGACPGGWTYQLVKRGVFVYAVDHGKMAASLHETGRIEHCPEDGFKFQPLKRKTIDWLVCDMVEQPMRISKLIGKWLINGWCRETIFNLKLPMKKRYQEVQLCLAYLEEELEKQGFWFKIQAKHLYHDREEITVHIAVMGRKPQ</sequence>